<comment type="function">
    <text evidence="1">Catalyzes the excretion of spermidine.</text>
</comment>
<comment type="subunit">
    <text evidence="1">Forms a complex with MdtI.</text>
</comment>
<comment type="subcellular location">
    <subcellularLocation>
        <location evidence="1">Cell inner membrane</location>
        <topology evidence="1">Multi-pass membrane protein</topology>
    </subcellularLocation>
</comment>
<comment type="similarity">
    <text evidence="1">Belongs to the drug/metabolite transporter (DMT) superfamily. Small multidrug resistance (SMR) (TC 2.A.7.1) family. MdtJ subfamily.</text>
</comment>
<protein>
    <recommendedName>
        <fullName evidence="1">Spermidine export protein MdtJ</fullName>
    </recommendedName>
</protein>
<dbReference type="EMBL" id="CU928145">
    <property type="protein sequence ID" value="CAU97619.1"/>
    <property type="molecule type" value="Genomic_DNA"/>
</dbReference>
<dbReference type="RefSeq" id="WP_000276149.1">
    <property type="nucleotide sequence ID" value="NZ_CP028304.1"/>
</dbReference>
<dbReference type="SMR" id="B7L5F2"/>
<dbReference type="GeneID" id="93775748"/>
<dbReference type="KEGG" id="eck:EC55989_1765"/>
<dbReference type="HOGENOM" id="CLU_133067_0_0_6"/>
<dbReference type="Proteomes" id="UP000000746">
    <property type="component" value="Chromosome"/>
</dbReference>
<dbReference type="GO" id="GO:0005886">
    <property type="term" value="C:plasma membrane"/>
    <property type="evidence" value="ECO:0007669"/>
    <property type="project" value="UniProtKB-SubCell"/>
</dbReference>
<dbReference type="GO" id="GO:0015199">
    <property type="term" value="F:amino-acid betaine transmembrane transporter activity"/>
    <property type="evidence" value="ECO:0007669"/>
    <property type="project" value="TreeGrafter"/>
</dbReference>
<dbReference type="GO" id="GO:0015297">
    <property type="term" value="F:antiporter activity"/>
    <property type="evidence" value="ECO:0007669"/>
    <property type="project" value="TreeGrafter"/>
</dbReference>
<dbReference type="GO" id="GO:0015220">
    <property type="term" value="F:choline transmembrane transporter activity"/>
    <property type="evidence" value="ECO:0007669"/>
    <property type="project" value="TreeGrafter"/>
</dbReference>
<dbReference type="GO" id="GO:0015606">
    <property type="term" value="F:spermidine transmembrane transporter activity"/>
    <property type="evidence" value="ECO:0007669"/>
    <property type="project" value="UniProtKB-UniRule"/>
</dbReference>
<dbReference type="GO" id="GO:0031460">
    <property type="term" value="P:glycine betaine transport"/>
    <property type="evidence" value="ECO:0007669"/>
    <property type="project" value="TreeGrafter"/>
</dbReference>
<dbReference type="FunFam" id="1.10.3730.20:FF:000001">
    <property type="entry name" value="Quaternary ammonium compound resistance transporter SugE"/>
    <property type="match status" value="1"/>
</dbReference>
<dbReference type="Gene3D" id="1.10.3730.20">
    <property type="match status" value="1"/>
</dbReference>
<dbReference type="HAMAP" id="MF_01598">
    <property type="entry name" value="MdtJ"/>
    <property type="match status" value="1"/>
</dbReference>
<dbReference type="InterPro" id="IPR000390">
    <property type="entry name" value="Small_drug/metabolite_transptr"/>
</dbReference>
<dbReference type="InterPro" id="IPR045324">
    <property type="entry name" value="Small_multidrug_res"/>
</dbReference>
<dbReference type="InterPro" id="IPR023740">
    <property type="entry name" value="Spermidine_export_MdtJ"/>
</dbReference>
<dbReference type="NCBIfam" id="NF007767">
    <property type="entry name" value="PRK10452.1"/>
    <property type="match status" value="1"/>
</dbReference>
<dbReference type="PANTHER" id="PTHR30561">
    <property type="entry name" value="SMR FAMILY PROTON-DEPENDENT DRUG EFFLUX TRANSPORTER SUGE"/>
    <property type="match status" value="1"/>
</dbReference>
<dbReference type="PANTHER" id="PTHR30561:SF2">
    <property type="entry name" value="SPERMIDINE EXPORT PROTEIN MDTJ"/>
    <property type="match status" value="1"/>
</dbReference>
<dbReference type="Pfam" id="PF00893">
    <property type="entry name" value="Multi_Drug_Res"/>
    <property type="match status" value="1"/>
</dbReference>
<dbReference type="SUPFAM" id="SSF103481">
    <property type="entry name" value="Multidrug resistance efflux transporter EmrE"/>
    <property type="match status" value="1"/>
</dbReference>
<feature type="chain" id="PRO_1000185773" description="Spermidine export protein MdtJ">
    <location>
        <begin position="1"/>
        <end position="121"/>
    </location>
</feature>
<feature type="transmembrane region" description="Helical" evidence="1">
    <location>
        <begin position="1"/>
        <end position="21"/>
    </location>
</feature>
<feature type="transmembrane region" description="Helical" evidence="1">
    <location>
        <begin position="32"/>
        <end position="52"/>
    </location>
</feature>
<feature type="transmembrane region" description="Helical" evidence="1">
    <location>
        <begin position="55"/>
        <end position="75"/>
    </location>
</feature>
<feature type="transmembrane region" description="Helical" evidence="1">
    <location>
        <begin position="82"/>
        <end position="102"/>
    </location>
</feature>
<organism>
    <name type="scientific">Escherichia coli (strain 55989 / EAEC)</name>
    <dbReference type="NCBI Taxonomy" id="585055"/>
    <lineage>
        <taxon>Bacteria</taxon>
        <taxon>Pseudomonadati</taxon>
        <taxon>Pseudomonadota</taxon>
        <taxon>Gammaproteobacteria</taxon>
        <taxon>Enterobacterales</taxon>
        <taxon>Enterobacteriaceae</taxon>
        <taxon>Escherichia</taxon>
    </lineage>
</organism>
<accession>B7L5F2</accession>
<gene>
    <name evidence="1" type="primary">mdtJ</name>
    <name type="ordered locus">EC55989_1765</name>
</gene>
<sequence>MYIYWILLGLAIATEITGTLSMKWASVSEGNGGFILMLVMISLSYIFLSFAVKKIALGVAYALWEGIGILFITLFSVLLFDESLSLMKIAGLTTLVAGIVLIKSGTRKARKPELEVNHGAV</sequence>
<keyword id="KW-0997">Cell inner membrane</keyword>
<keyword id="KW-1003">Cell membrane</keyword>
<keyword id="KW-0472">Membrane</keyword>
<keyword id="KW-1185">Reference proteome</keyword>
<keyword id="KW-0812">Transmembrane</keyword>
<keyword id="KW-1133">Transmembrane helix</keyword>
<keyword id="KW-0813">Transport</keyword>
<proteinExistence type="inferred from homology"/>
<evidence type="ECO:0000255" key="1">
    <source>
        <dbReference type="HAMAP-Rule" id="MF_01598"/>
    </source>
</evidence>
<name>MDTJ_ECO55</name>
<reference key="1">
    <citation type="journal article" date="2009" name="PLoS Genet.">
        <title>Organised genome dynamics in the Escherichia coli species results in highly diverse adaptive paths.</title>
        <authorList>
            <person name="Touchon M."/>
            <person name="Hoede C."/>
            <person name="Tenaillon O."/>
            <person name="Barbe V."/>
            <person name="Baeriswyl S."/>
            <person name="Bidet P."/>
            <person name="Bingen E."/>
            <person name="Bonacorsi S."/>
            <person name="Bouchier C."/>
            <person name="Bouvet O."/>
            <person name="Calteau A."/>
            <person name="Chiapello H."/>
            <person name="Clermont O."/>
            <person name="Cruveiller S."/>
            <person name="Danchin A."/>
            <person name="Diard M."/>
            <person name="Dossat C."/>
            <person name="Karoui M.E."/>
            <person name="Frapy E."/>
            <person name="Garry L."/>
            <person name="Ghigo J.M."/>
            <person name="Gilles A.M."/>
            <person name="Johnson J."/>
            <person name="Le Bouguenec C."/>
            <person name="Lescat M."/>
            <person name="Mangenot S."/>
            <person name="Martinez-Jehanne V."/>
            <person name="Matic I."/>
            <person name="Nassif X."/>
            <person name="Oztas S."/>
            <person name="Petit M.A."/>
            <person name="Pichon C."/>
            <person name="Rouy Z."/>
            <person name="Ruf C.S."/>
            <person name="Schneider D."/>
            <person name="Tourret J."/>
            <person name="Vacherie B."/>
            <person name="Vallenet D."/>
            <person name="Medigue C."/>
            <person name="Rocha E.P.C."/>
            <person name="Denamur E."/>
        </authorList>
    </citation>
    <scope>NUCLEOTIDE SEQUENCE [LARGE SCALE GENOMIC DNA]</scope>
    <source>
        <strain>55989 / EAEC</strain>
    </source>
</reference>